<dbReference type="EC" id="6.1.1.7" evidence="1"/>
<dbReference type="EMBL" id="CR936503">
    <property type="protein sequence ID" value="CAI54688.1"/>
    <property type="molecule type" value="Genomic_DNA"/>
</dbReference>
<dbReference type="RefSeq" id="WP_011374096.1">
    <property type="nucleotide sequence ID" value="NC_007576.1"/>
</dbReference>
<dbReference type="SMR" id="Q38YN9"/>
<dbReference type="STRING" id="314315.LCA_0387"/>
<dbReference type="KEGG" id="lsa:LCA_0387"/>
<dbReference type="eggNOG" id="COG0013">
    <property type="taxonomic scope" value="Bacteria"/>
</dbReference>
<dbReference type="HOGENOM" id="CLU_004485_1_1_9"/>
<dbReference type="OrthoDB" id="9803884at2"/>
<dbReference type="Proteomes" id="UP000002707">
    <property type="component" value="Chromosome"/>
</dbReference>
<dbReference type="GO" id="GO:0005829">
    <property type="term" value="C:cytosol"/>
    <property type="evidence" value="ECO:0007669"/>
    <property type="project" value="TreeGrafter"/>
</dbReference>
<dbReference type="GO" id="GO:0004813">
    <property type="term" value="F:alanine-tRNA ligase activity"/>
    <property type="evidence" value="ECO:0007669"/>
    <property type="project" value="UniProtKB-UniRule"/>
</dbReference>
<dbReference type="GO" id="GO:0002161">
    <property type="term" value="F:aminoacyl-tRNA deacylase activity"/>
    <property type="evidence" value="ECO:0007669"/>
    <property type="project" value="TreeGrafter"/>
</dbReference>
<dbReference type="GO" id="GO:0005524">
    <property type="term" value="F:ATP binding"/>
    <property type="evidence" value="ECO:0007669"/>
    <property type="project" value="UniProtKB-UniRule"/>
</dbReference>
<dbReference type="GO" id="GO:0140096">
    <property type="term" value="F:catalytic activity, acting on a protein"/>
    <property type="evidence" value="ECO:0007669"/>
    <property type="project" value="UniProtKB-ARBA"/>
</dbReference>
<dbReference type="GO" id="GO:0016740">
    <property type="term" value="F:transferase activity"/>
    <property type="evidence" value="ECO:0007669"/>
    <property type="project" value="UniProtKB-ARBA"/>
</dbReference>
<dbReference type="GO" id="GO:0000049">
    <property type="term" value="F:tRNA binding"/>
    <property type="evidence" value="ECO:0007669"/>
    <property type="project" value="UniProtKB-KW"/>
</dbReference>
<dbReference type="GO" id="GO:0008270">
    <property type="term" value="F:zinc ion binding"/>
    <property type="evidence" value="ECO:0007669"/>
    <property type="project" value="UniProtKB-UniRule"/>
</dbReference>
<dbReference type="GO" id="GO:0006419">
    <property type="term" value="P:alanyl-tRNA aminoacylation"/>
    <property type="evidence" value="ECO:0007669"/>
    <property type="project" value="UniProtKB-UniRule"/>
</dbReference>
<dbReference type="CDD" id="cd00673">
    <property type="entry name" value="AlaRS_core"/>
    <property type="match status" value="1"/>
</dbReference>
<dbReference type="FunFam" id="3.10.310.40:FF:000001">
    <property type="entry name" value="Alanine--tRNA ligase"/>
    <property type="match status" value="1"/>
</dbReference>
<dbReference type="FunFam" id="3.30.54.20:FF:000001">
    <property type="entry name" value="Alanine--tRNA ligase"/>
    <property type="match status" value="1"/>
</dbReference>
<dbReference type="FunFam" id="3.30.930.10:FF:000046">
    <property type="entry name" value="Alanine--tRNA ligase"/>
    <property type="match status" value="1"/>
</dbReference>
<dbReference type="FunFam" id="3.30.980.10:FF:000004">
    <property type="entry name" value="Alanine--tRNA ligase, cytoplasmic"/>
    <property type="match status" value="1"/>
</dbReference>
<dbReference type="Gene3D" id="2.40.30.130">
    <property type="match status" value="1"/>
</dbReference>
<dbReference type="Gene3D" id="3.10.310.40">
    <property type="match status" value="1"/>
</dbReference>
<dbReference type="Gene3D" id="3.30.54.20">
    <property type="match status" value="1"/>
</dbReference>
<dbReference type="Gene3D" id="6.10.250.550">
    <property type="match status" value="1"/>
</dbReference>
<dbReference type="Gene3D" id="3.30.930.10">
    <property type="entry name" value="Bira Bifunctional Protein, Domain 2"/>
    <property type="match status" value="1"/>
</dbReference>
<dbReference type="Gene3D" id="3.30.980.10">
    <property type="entry name" value="Threonyl-trna Synthetase, Chain A, domain 2"/>
    <property type="match status" value="1"/>
</dbReference>
<dbReference type="HAMAP" id="MF_00036_B">
    <property type="entry name" value="Ala_tRNA_synth_B"/>
    <property type="match status" value="1"/>
</dbReference>
<dbReference type="InterPro" id="IPR045864">
    <property type="entry name" value="aa-tRNA-synth_II/BPL/LPL"/>
</dbReference>
<dbReference type="InterPro" id="IPR002318">
    <property type="entry name" value="Ala-tRNA-lgiase_IIc"/>
</dbReference>
<dbReference type="InterPro" id="IPR018162">
    <property type="entry name" value="Ala-tRNA-ligase_IIc_anticod-bd"/>
</dbReference>
<dbReference type="InterPro" id="IPR018165">
    <property type="entry name" value="Ala-tRNA-synth_IIc_core"/>
</dbReference>
<dbReference type="InterPro" id="IPR018164">
    <property type="entry name" value="Ala-tRNA-synth_IIc_N"/>
</dbReference>
<dbReference type="InterPro" id="IPR050058">
    <property type="entry name" value="Ala-tRNA_ligase"/>
</dbReference>
<dbReference type="InterPro" id="IPR023033">
    <property type="entry name" value="Ala_tRNA_ligase_euk/bac"/>
</dbReference>
<dbReference type="InterPro" id="IPR003156">
    <property type="entry name" value="DHHA1_dom"/>
</dbReference>
<dbReference type="InterPro" id="IPR018163">
    <property type="entry name" value="Thr/Ala-tRNA-synth_IIc_edit"/>
</dbReference>
<dbReference type="InterPro" id="IPR009000">
    <property type="entry name" value="Transl_B-barrel_sf"/>
</dbReference>
<dbReference type="InterPro" id="IPR012947">
    <property type="entry name" value="tRNA_SAD"/>
</dbReference>
<dbReference type="NCBIfam" id="TIGR00344">
    <property type="entry name" value="alaS"/>
    <property type="match status" value="1"/>
</dbReference>
<dbReference type="PANTHER" id="PTHR11777:SF9">
    <property type="entry name" value="ALANINE--TRNA LIGASE, CYTOPLASMIC"/>
    <property type="match status" value="1"/>
</dbReference>
<dbReference type="PANTHER" id="PTHR11777">
    <property type="entry name" value="ALANYL-TRNA SYNTHETASE"/>
    <property type="match status" value="1"/>
</dbReference>
<dbReference type="Pfam" id="PF02272">
    <property type="entry name" value="DHHA1"/>
    <property type="match status" value="1"/>
</dbReference>
<dbReference type="Pfam" id="PF01411">
    <property type="entry name" value="tRNA-synt_2c"/>
    <property type="match status" value="1"/>
</dbReference>
<dbReference type="Pfam" id="PF07973">
    <property type="entry name" value="tRNA_SAD"/>
    <property type="match status" value="1"/>
</dbReference>
<dbReference type="PRINTS" id="PR00980">
    <property type="entry name" value="TRNASYNTHALA"/>
</dbReference>
<dbReference type="SMART" id="SM00863">
    <property type="entry name" value="tRNA_SAD"/>
    <property type="match status" value="1"/>
</dbReference>
<dbReference type="SUPFAM" id="SSF55681">
    <property type="entry name" value="Class II aaRS and biotin synthetases"/>
    <property type="match status" value="1"/>
</dbReference>
<dbReference type="SUPFAM" id="SSF101353">
    <property type="entry name" value="Putative anticodon-binding domain of alanyl-tRNA synthetase (AlaRS)"/>
    <property type="match status" value="1"/>
</dbReference>
<dbReference type="SUPFAM" id="SSF55186">
    <property type="entry name" value="ThrRS/AlaRS common domain"/>
    <property type="match status" value="1"/>
</dbReference>
<dbReference type="SUPFAM" id="SSF50447">
    <property type="entry name" value="Translation proteins"/>
    <property type="match status" value="1"/>
</dbReference>
<dbReference type="PROSITE" id="PS50860">
    <property type="entry name" value="AA_TRNA_LIGASE_II_ALA"/>
    <property type="match status" value="1"/>
</dbReference>
<accession>Q38YN9</accession>
<protein>
    <recommendedName>
        <fullName evidence="1">Alanine--tRNA ligase</fullName>
        <ecNumber evidence="1">6.1.1.7</ecNumber>
    </recommendedName>
    <alternativeName>
        <fullName evidence="1">Alanyl-tRNA synthetase</fullName>
        <shortName evidence="1">AlaRS</shortName>
    </alternativeName>
</protein>
<sequence>MKQLTSAQVRQMFLDFFKEKGHDVEPSASLIPDEDPTLLWINSGVATLKKYFDGRVVPNNPRITNAQKSIRTNDIENVGKTARHHTFFEMLGNFSVGDYFKEDAIPWAWEFLTSDKWIGLDPEKLYVTVYPKDKDAHRIWHEKVGLAEDRIIEVEDNFWDIGEGPCGPDSEIFYDRGQSFNNVSEDDPENYPGGENERYLEVWNIVFSEFNHLPNGEYVEQPHKNIDTGMGLERLVSVIQEAPTNFETDLFMPLIEATAAMSDHKQYGQNAADDISFKIIADHARAVTFAIGDGAMPANEGRGYVLRRLIRRAILNGKKLGINDAFMYKLVPIVGEIMHSYYPDVLEQKDFIEKVIRSEEDRFRETLNDGLRLLNQTIEAVKAENETEINGADAFKLFDTFGFPIELTTEYAEDEGLTVDQAGFEKEMAAQKARARNARSDEQSMGSQNEVLLNIKTKSEFTGYSELETESRLADIIQDNAEQESVTTGVAQLVFEATPFYAEMGGQVADQGIIKNLAGQVVAEVTDVQYAPNGQPLHTVKVLKEMISGVHYTLSVDPTFRGGVVKNHTATHLLDQALRDVLGEHTHQAGSLVEPDYLRFDFTNLGQVTPDQLAEVEQIVNDKIWAALPVNTVETDIETAKQMGAIALFTEKYGKTVRVVQIGDYSMELCGGTHANNTSDLGLFKITSESGIGAGTRRIEAVTSKAAFKYLNDKQVLLNELASELKVAQTKDLPKKIQQLQADLKAEQKENEQLKAKFAQEQAGNVFENVVEAGQWRLVAADAKVAGMNELRQLADQWQQKQISDVLVLATVAGDKVSLIVAVAPDAIKAGIKAGDLIKQIAPLVGGGGGGRPDMAQAGGKNPAGIPDALAAAKEFLA</sequence>
<keyword id="KW-0030">Aminoacyl-tRNA synthetase</keyword>
<keyword id="KW-0067">ATP-binding</keyword>
<keyword id="KW-0963">Cytoplasm</keyword>
<keyword id="KW-0436">Ligase</keyword>
<keyword id="KW-0479">Metal-binding</keyword>
<keyword id="KW-0547">Nucleotide-binding</keyword>
<keyword id="KW-0648">Protein biosynthesis</keyword>
<keyword id="KW-1185">Reference proteome</keyword>
<keyword id="KW-0694">RNA-binding</keyword>
<keyword id="KW-0820">tRNA-binding</keyword>
<keyword id="KW-0862">Zinc</keyword>
<evidence type="ECO:0000255" key="1">
    <source>
        <dbReference type="HAMAP-Rule" id="MF_00036"/>
    </source>
</evidence>
<comment type="function">
    <text evidence="1">Catalyzes the attachment of alanine to tRNA(Ala) in a two-step reaction: alanine is first activated by ATP to form Ala-AMP and then transferred to the acceptor end of tRNA(Ala). Also edits incorrectly charged Ser-tRNA(Ala) and Gly-tRNA(Ala) via its editing domain.</text>
</comment>
<comment type="catalytic activity">
    <reaction evidence="1">
        <text>tRNA(Ala) + L-alanine + ATP = L-alanyl-tRNA(Ala) + AMP + diphosphate</text>
        <dbReference type="Rhea" id="RHEA:12540"/>
        <dbReference type="Rhea" id="RHEA-COMP:9657"/>
        <dbReference type="Rhea" id="RHEA-COMP:9923"/>
        <dbReference type="ChEBI" id="CHEBI:30616"/>
        <dbReference type="ChEBI" id="CHEBI:33019"/>
        <dbReference type="ChEBI" id="CHEBI:57972"/>
        <dbReference type="ChEBI" id="CHEBI:78442"/>
        <dbReference type="ChEBI" id="CHEBI:78497"/>
        <dbReference type="ChEBI" id="CHEBI:456215"/>
        <dbReference type="EC" id="6.1.1.7"/>
    </reaction>
</comment>
<comment type="cofactor">
    <cofactor evidence="1">
        <name>Zn(2+)</name>
        <dbReference type="ChEBI" id="CHEBI:29105"/>
    </cofactor>
    <text evidence="1">Binds 1 zinc ion per subunit.</text>
</comment>
<comment type="subcellular location">
    <subcellularLocation>
        <location evidence="1">Cytoplasm</location>
    </subcellularLocation>
</comment>
<comment type="domain">
    <text evidence="1">Consists of three domains; the N-terminal catalytic domain, the editing domain and the C-terminal C-Ala domain. The editing domain removes incorrectly charged amino acids, while the C-Ala domain, along with tRNA(Ala), serves as a bridge to cooperatively bring together the editing and aminoacylation centers thus stimulating deacylation of misacylated tRNAs.</text>
</comment>
<comment type="similarity">
    <text evidence="1">Belongs to the class-II aminoacyl-tRNA synthetase family.</text>
</comment>
<feature type="chain" id="PRO_0000347649" description="Alanine--tRNA ligase">
    <location>
        <begin position="1"/>
        <end position="878"/>
    </location>
</feature>
<feature type="binding site" evidence="1">
    <location>
        <position position="568"/>
    </location>
    <ligand>
        <name>Zn(2+)</name>
        <dbReference type="ChEBI" id="CHEBI:29105"/>
    </ligand>
</feature>
<feature type="binding site" evidence="1">
    <location>
        <position position="572"/>
    </location>
    <ligand>
        <name>Zn(2+)</name>
        <dbReference type="ChEBI" id="CHEBI:29105"/>
    </ligand>
</feature>
<feature type="binding site" evidence="1">
    <location>
        <position position="670"/>
    </location>
    <ligand>
        <name>Zn(2+)</name>
        <dbReference type="ChEBI" id="CHEBI:29105"/>
    </ligand>
</feature>
<feature type="binding site" evidence="1">
    <location>
        <position position="674"/>
    </location>
    <ligand>
        <name>Zn(2+)</name>
        <dbReference type="ChEBI" id="CHEBI:29105"/>
    </ligand>
</feature>
<gene>
    <name evidence="1" type="primary">alaS</name>
    <name type="ordered locus">LCA_0387</name>
</gene>
<organism>
    <name type="scientific">Latilactobacillus sakei subsp. sakei (strain 23K)</name>
    <name type="common">Lactobacillus sakei subsp. sakei</name>
    <dbReference type="NCBI Taxonomy" id="314315"/>
    <lineage>
        <taxon>Bacteria</taxon>
        <taxon>Bacillati</taxon>
        <taxon>Bacillota</taxon>
        <taxon>Bacilli</taxon>
        <taxon>Lactobacillales</taxon>
        <taxon>Lactobacillaceae</taxon>
        <taxon>Latilactobacillus</taxon>
    </lineage>
</organism>
<proteinExistence type="inferred from homology"/>
<reference key="1">
    <citation type="journal article" date="2005" name="Nat. Biotechnol.">
        <title>The complete genome sequence of the meat-borne lactic acid bacterium Lactobacillus sakei 23K.</title>
        <authorList>
            <person name="Chaillou S."/>
            <person name="Champomier-Verges M.-C."/>
            <person name="Cornet M."/>
            <person name="Crutz-Le Coq A.-M."/>
            <person name="Dudez A.-M."/>
            <person name="Martin V."/>
            <person name="Beaufils S."/>
            <person name="Darbon-Rongere E."/>
            <person name="Bossy R."/>
            <person name="Loux V."/>
            <person name="Zagorec M."/>
        </authorList>
    </citation>
    <scope>NUCLEOTIDE SEQUENCE [LARGE SCALE GENOMIC DNA]</scope>
    <source>
        <strain>23K</strain>
    </source>
</reference>
<name>SYA_LATSS</name>